<protein>
    <recommendedName>
        <fullName evidence="16 17">Cullin-3A</fullName>
        <shortName evidence="16 17">AtCUL3a</shortName>
    </recommendedName>
</protein>
<name>CUL3A_ARATH</name>
<organism>
    <name type="scientific">Arabidopsis thaliana</name>
    <name type="common">Mouse-ear cress</name>
    <dbReference type="NCBI Taxonomy" id="3702"/>
    <lineage>
        <taxon>Eukaryota</taxon>
        <taxon>Viridiplantae</taxon>
        <taxon>Streptophyta</taxon>
        <taxon>Embryophyta</taxon>
        <taxon>Tracheophyta</taxon>
        <taxon>Spermatophyta</taxon>
        <taxon>Magnoliopsida</taxon>
        <taxon>eudicotyledons</taxon>
        <taxon>Gunneridae</taxon>
        <taxon>Pentapetalae</taxon>
        <taxon>rosids</taxon>
        <taxon>malvids</taxon>
        <taxon>Brassicales</taxon>
        <taxon>Brassicaceae</taxon>
        <taxon>Camelineae</taxon>
        <taxon>Arabidopsis</taxon>
    </lineage>
</organism>
<gene>
    <name evidence="16 17" type="primary">CUL3A</name>
    <name evidence="15" type="synonym">CUL3</name>
    <name evidence="19" type="ordered locus">At1g26830</name>
    <name evidence="21" type="ORF">T24P13.25</name>
    <name evidence="20" type="ORF">T2P11.2</name>
</gene>
<sequence length="732" mass="85313">MSNQKKRNFQIEAFKHRVVVDPKYADKTWQILERAIHQIYNQDASGLSFEELYRNAYNMVLHKFGEKLYTGFIATMTSHLKEKSKLIEAAQGGSFLEELNKKWNEHNKALEMIRDILMYMDRTYIESTKKTHVHPMGLNLWRDNVVHFTKIHTRLLNTLLDLVQKERIGEVIDRGLMRNVIKMFMDLGESVYQEDFEKPFLDASSEFYKVESQEFIESCDCGDYLKKSEKRLTEEIERVAHYLDAKSEEKITSVVEKEMIANHMQRLVHMENSGLVNMLLNDKYEDLGRMYNLFRRVTNGLVTVRDVMTSHLREMGKQLVTDPEKSKDPVEFVQRLLDERDKYDKIINTAFGNDKTFQNALNSSFEYFINLNARSPEFISLFVDDKLRKGLKGITDVDVEVILDKVMMLFRYLQEKDVFEKYYKQHLAKRLLSGKTVSDDAERSLIVKLKTECGYQFTSKLEGMFTDMKTSEDTMRGFYGSHPELSEGPTLIVQVLTTGSWPTQPAVPCNLPAEVSVLCEKFRSYYLGTHTGRRLSWQTNMGTADIKAIFGKGQKHELNVSTFQMCVLMLFNNSDRLSYKEIEQATEIPAADLKRCLQSLACVKGKNVIKKEPMSKDIGEEDLFVVNDKFTSKFYKVKIGTVVAQKETEPEKQETRQRVEEDRKPQIEAAIVRIMKSRKILDHNNIIAEVTKQLQPRFLANPTEIKKRIESLIERDFLERDSTDRKLYRYLA</sequence>
<comment type="function">
    <text evidence="7 9 10 11">Component of the cullin-RING ubiquitin ligases (CRL), or CUL3-RBX1-BTB protein E3 ligase complexes which mediate the ubiquitination and subsequent proteasomal degradation of target proteins. The functional specificity of the CRL complex depends on the BTB domain-containing protein as the substrate recognition component. Involved in embryo pattern formation and endosperm development. Required for the normal division and organization of the root stem cells and columella root cap cells. Regulates primary root growth by an unknown pathway, but in an ethylene-dependent manner. Functions in distal root patterning, by an ethylene-independent mechanism. Functionally redundant with CUL3B.</text>
</comment>
<comment type="subunit">
    <text evidence="5 6 7 8 9 12 13 14">Interacts with CSN2 and RBX1A. Interacts with BTB/POZ domain-containing proteins BPM1, BPM2, BPM3, BPM6, BT1, BT2, BT3, BT5, AT1G01640, AT1G21780 and AT5G48510 (PubMed:12615944, PubMed:15618422, PubMed:15659098, PubMed:15749712, PubMed:15772280). Interacts with SR1IP1 (PubMed:24528504). Interacts with NPR3 and NPR4 (PubMed:22699612). Binds to NPR1; this interaction requires NPR3 and NPR4 (PubMed:22699612, PubMed:35545668).</text>
</comment>
<comment type="interaction">
    <interactant intactId="EBI-531362">
        <id>Q9ZVH4</id>
    </interactant>
    <interactant intactId="EBI-541047">
        <id>Q9XHZ8</id>
        <label>At1g21780</label>
    </interactant>
    <organismsDiffer>false</organismsDiffer>
    <experiments>4</experiments>
</comment>
<comment type="interaction">
    <interactant intactId="EBI-531362">
        <id>Q9ZVH4</id>
    </interactant>
    <interactant intactId="EBI-540891">
        <id>Q8L765</id>
        <label>BPM1</label>
    </interactant>
    <organismsDiffer>false</organismsDiffer>
    <experiments>5</experiments>
</comment>
<comment type="interaction">
    <interactant intactId="EBI-531362">
        <id>Q9ZVH4</id>
    </interactant>
    <interactant intactId="EBI-540923">
        <id>O22286</id>
        <label>BPM3</label>
    </interactant>
    <organismsDiffer>false</organismsDiffer>
    <experiments>3</experiments>
</comment>
<comment type="interaction">
    <interactant intactId="EBI-531362">
        <id>Q9ZVH4</id>
    </interactant>
    <interactant intactId="EBI-1392127">
        <id>P93002</id>
        <label>NPR1</label>
    </interactant>
    <organismsDiffer>false</organismsDiffer>
    <experiments>3</experiments>
</comment>
<comment type="interaction">
    <interactant intactId="EBI-531362">
        <id>Q9ZVH4</id>
    </interactant>
    <interactant intactId="EBI-532404">
        <id>Q940X7</id>
        <label>RBX1A</label>
    </interactant>
    <organismsDiffer>false</organismsDiffer>
    <experiments>4</experiments>
</comment>
<comment type="developmental stage">
    <text evidence="10">Expressed during flower development in floral meristem, sepals, petals, developing carpels, growing integuments and tetrads of megaspores. In mature ovules, expressed in the cells of the embryo sac. Expressed in the sporogenous cells, tetrads of microspores and mature pollen in stamens After fertilization, expressed in the embryo and endosperm at the globular and heart stages. The progressively decreases during ovule development and is not observed in the developing seed coat.</text>
</comment>
<comment type="PTM">
    <text evidence="2">Neddylated. Deneddylated via its interaction with the COP9 signalosome (CSN) complex.</text>
</comment>
<comment type="disruption phenotype">
    <text evidence="7 9 10">No visible phenotype under normal growth condition. Reduced sensitivity of the inhibition of hypocotyl growth in far-red light. Cul3a and cul3b double mutant is embryonic lethal (PubMed:16045478).</text>
</comment>
<comment type="similarity">
    <text evidence="4">Belongs to the cullin family.</text>
</comment>
<keyword id="KW-1017">Isopeptide bond</keyword>
<keyword id="KW-1185">Reference proteome</keyword>
<keyword id="KW-0832">Ubl conjugation</keyword>
<keyword id="KW-0833">Ubl conjugation pathway</keyword>
<evidence type="ECO:0000250" key="1">
    <source>
        <dbReference type="UniProtKB" id="Q13616"/>
    </source>
</evidence>
<evidence type="ECO:0000250" key="2">
    <source>
        <dbReference type="UniProtKB" id="Q17391"/>
    </source>
</evidence>
<evidence type="ECO:0000255" key="3"/>
<evidence type="ECO:0000255" key="4">
    <source>
        <dbReference type="PROSITE-ProRule" id="PRU00330"/>
    </source>
</evidence>
<evidence type="ECO:0000269" key="5">
    <source>
    </source>
</evidence>
<evidence type="ECO:0000269" key="6">
    <source>
    </source>
</evidence>
<evidence type="ECO:0000269" key="7">
    <source>
    </source>
</evidence>
<evidence type="ECO:0000269" key="8">
    <source>
    </source>
</evidence>
<evidence type="ECO:0000269" key="9">
    <source>
    </source>
</evidence>
<evidence type="ECO:0000269" key="10">
    <source>
    </source>
</evidence>
<evidence type="ECO:0000269" key="11">
    <source>
    </source>
</evidence>
<evidence type="ECO:0000269" key="12">
    <source>
    </source>
</evidence>
<evidence type="ECO:0000269" key="13">
    <source>
    </source>
</evidence>
<evidence type="ECO:0000269" key="14">
    <source>
    </source>
</evidence>
<evidence type="ECO:0000303" key="15">
    <source>
    </source>
</evidence>
<evidence type="ECO:0000303" key="16">
    <source>
    </source>
</evidence>
<evidence type="ECO:0000303" key="17">
    <source ref="1"/>
</evidence>
<evidence type="ECO:0000305" key="18"/>
<evidence type="ECO:0000312" key="19">
    <source>
        <dbReference type="Araport" id="AT1G26830"/>
    </source>
</evidence>
<evidence type="ECO:0000312" key="20">
    <source>
        <dbReference type="EMBL" id="AAD14503.1"/>
    </source>
</evidence>
<evidence type="ECO:0000312" key="21">
    <source>
        <dbReference type="EMBL" id="AAF87034.1"/>
    </source>
</evidence>
<accession>Q9ZVH4</accession>
<accession>Q0WL17</accession>
<accession>Q7Y1Y8</accession>
<feature type="chain" id="PRO_0000396849" description="Cullin-3A">
    <location>
        <begin position="1"/>
        <end position="732"/>
    </location>
</feature>
<feature type="domain" description="Cullin neddylation" evidence="3">
    <location>
        <begin position="662"/>
        <end position="724"/>
    </location>
</feature>
<feature type="cross-link" description="Glycyl lysine isopeptide (Lys-Gly) (interchain with G-Cter in NEDD8)" evidence="1">
    <location>
        <position position="676"/>
    </location>
</feature>
<feature type="mutagenesis site" description="Abolishes the interaction with AT1G21780 protein." evidence="9">
    <original>SF</original>
    <variation>AA</variation>
    <location>
        <begin position="48"/>
        <end position="49"/>
    </location>
</feature>
<feature type="sequence conflict" description="In Ref. 4; BAF02190." evidence="18" ref="4">
    <original>T</original>
    <variation>I</variation>
    <location>
        <position position="458"/>
    </location>
</feature>
<dbReference type="EMBL" id="AJ319540">
    <property type="protein sequence ID" value="CAC85344.1"/>
    <property type="molecule type" value="mRNA"/>
</dbReference>
<dbReference type="EMBL" id="AJ344252">
    <property type="protein sequence ID" value="CAC87120.1"/>
    <property type="molecule type" value="mRNA"/>
</dbReference>
<dbReference type="EMBL" id="AC005508">
    <property type="protein sequence ID" value="AAD14503.1"/>
    <property type="molecule type" value="Genomic_DNA"/>
</dbReference>
<dbReference type="EMBL" id="AC006535">
    <property type="protein sequence ID" value="AAF87034.1"/>
    <property type="molecule type" value="Genomic_DNA"/>
</dbReference>
<dbReference type="EMBL" id="CP002684">
    <property type="protein sequence ID" value="AEE30747.1"/>
    <property type="molecule type" value="Genomic_DNA"/>
</dbReference>
<dbReference type="EMBL" id="AK230392">
    <property type="protein sequence ID" value="BAF02190.1"/>
    <property type="molecule type" value="mRNA"/>
</dbReference>
<dbReference type="PIR" id="A86395">
    <property type="entry name" value="A86395"/>
</dbReference>
<dbReference type="RefSeq" id="NP_174005.1">
    <property type="nucleotide sequence ID" value="NM_102447.5"/>
</dbReference>
<dbReference type="SMR" id="Q9ZVH4"/>
<dbReference type="BioGRID" id="24462">
    <property type="interactions" value="26"/>
</dbReference>
<dbReference type="DIP" id="DIP-33568N"/>
<dbReference type="FunCoup" id="Q9ZVH4">
    <property type="interactions" value="4644"/>
</dbReference>
<dbReference type="IntAct" id="Q9ZVH4">
    <property type="interactions" value="19"/>
</dbReference>
<dbReference type="STRING" id="3702.Q9ZVH4"/>
<dbReference type="iPTMnet" id="Q9ZVH4"/>
<dbReference type="PaxDb" id="3702-AT1G26830.1"/>
<dbReference type="ProteomicsDB" id="220374"/>
<dbReference type="EnsemblPlants" id="AT1G26830.1">
    <property type="protein sequence ID" value="AT1G26830.1"/>
    <property type="gene ID" value="AT1G26830"/>
</dbReference>
<dbReference type="GeneID" id="839226"/>
<dbReference type="Gramene" id="AT1G26830.1">
    <property type="protein sequence ID" value="AT1G26830.1"/>
    <property type="gene ID" value="AT1G26830"/>
</dbReference>
<dbReference type="KEGG" id="ath:AT1G26830"/>
<dbReference type="Araport" id="AT1G26830"/>
<dbReference type="TAIR" id="AT1G26830">
    <property type="gene designation" value="CUL3"/>
</dbReference>
<dbReference type="eggNOG" id="KOG2166">
    <property type="taxonomic scope" value="Eukaryota"/>
</dbReference>
<dbReference type="HOGENOM" id="CLU_004747_7_1_1"/>
<dbReference type="InParanoid" id="Q9ZVH4"/>
<dbReference type="OMA" id="IFIFREE"/>
<dbReference type="OrthoDB" id="27073at2759"/>
<dbReference type="PhylomeDB" id="Q9ZVH4"/>
<dbReference type="PRO" id="PR:Q9ZVH4"/>
<dbReference type="Proteomes" id="UP000006548">
    <property type="component" value="Chromosome 1"/>
</dbReference>
<dbReference type="ExpressionAtlas" id="Q9ZVH4">
    <property type="expression patterns" value="baseline and differential"/>
</dbReference>
<dbReference type="GO" id="GO:0031625">
    <property type="term" value="F:ubiquitin protein ligase binding"/>
    <property type="evidence" value="ECO:0007669"/>
    <property type="project" value="InterPro"/>
</dbReference>
<dbReference type="GO" id="GO:0009911">
    <property type="term" value="P:positive regulation of flower development"/>
    <property type="evidence" value="ECO:0000315"/>
    <property type="project" value="TAIR"/>
</dbReference>
<dbReference type="GO" id="GO:0009639">
    <property type="term" value="P:response to red or far red light"/>
    <property type="evidence" value="ECO:0000315"/>
    <property type="project" value="TAIR"/>
</dbReference>
<dbReference type="GO" id="GO:0006511">
    <property type="term" value="P:ubiquitin-dependent protein catabolic process"/>
    <property type="evidence" value="ECO:0007669"/>
    <property type="project" value="InterPro"/>
</dbReference>
<dbReference type="FunFam" id="1.10.10.10:FF:000183">
    <property type="entry name" value="Cullin 3"/>
    <property type="match status" value="1"/>
</dbReference>
<dbReference type="FunFam" id="1.20.1310.10:FF:000001">
    <property type="entry name" value="Cullin 3"/>
    <property type="match status" value="1"/>
</dbReference>
<dbReference type="FunFam" id="1.20.1310.10:FF:000005">
    <property type="entry name" value="Cullin 3"/>
    <property type="match status" value="1"/>
</dbReference>
<dbReference type="FunFam" id="1.20.1310.10:FF:000006">
    <property type="entry name" value="Cullin 3"/>
    <property type="match status" value="1"/>
</dbReference>
<dbReference type="FunFam" id="1.20.1310.10:FF:000002">
    <property type="entry name" value="cullin-3 isoform X1"/>
    <property type="match status" value="1"/>
</dbReference>
<dbReference type="FunFam" id="3.30.230.130:FF:000007">
    <property type="entry name" value="Cullin-3A like"/>
    <property type="match status" value="1"/>
</dbReference>
<dbReference type="Gene3D" id="1.20.1310.10">
    <property type="entry name" value="Cullin Repeats"/>
    <property type="match status" value="4"/>
</dbReference>
<dbReference type="Gene3D" id="3.30.230.130">
    <property type="entry name" value="Cullin, Chain C, Domain 2"/>
    <property type="match status" value="1"/>
</dbReference>
<dbReference type="Gene3D" id="1.10.10.10">
    <property type="entry name" value="Winged helix-like DNA-binding domain superfamily/Winged helix DNA-binding domain"/>
    <property type="match status" value="1"/>
</dbReference>
<dbReference type="InterPro" id="IPR045093">
    <property type="entry name" value="Cullin"/>
</dbReference>
<dbReference type="InterPro" id="IPR016158">
    <property type="entry name" value="Cullin_homology"/>
</dbReference>
<dbReference type="InterPro" id="IPR036317">
    <property type="entry name" value="Cullin_homology_sf"/>
</dbReference>
<dbReference type="InterPro" id="IPR001373">
    <property type="entry name" value="Cullin_N"/>
</dbReference>
<dbReference type="InterPro" id="IPR019559">
    <property type="entry name" value="Cullin_neddylation_domain"/>
</dbReference>
<dbReference type="InterPro" id="IPR016159">
    <property type="entry name" value="Cullin_repeat-like_dom_sf"/>
</dbReference>
<dbReference type="InterPro" id="IPR036388">
    <property type="entry name" value="WH-like_DNA-bd_sf"/>
</dbReference>
<dbReference type="InterPro" id="IPR036390">
    <property type="entry name" value="WH_DNA-bd_sf"/>
</dbReference>
<dbReference type="PANTHER" id="PTHR11932">
    <property type="entry name" value="CULLIN"/>
    <property type="match status" value="1"/>
</dbReference>
<dbReference type="Pfam" id="PF00888">
    <property type="entry name" value="Cullin"/>
    <property type="match status" value="1"/>
</dbReference>
<dbReference type="Pfam" id="PF10557">
    <property type="entry name" value="Cullin_Nedd8"/>
    <property type="match status" value="1"/>
</dbReference>
<dbReference type="SMART" id="SM00182">
    <property type="entry name" value="CULLIN"/>
    <property type="match status" value="1"/>
</dbReference>
<dbReference type="SMART" id="SM00884">
    <property type="entry name" value="Cullin_Nedd8"/>
    <property type="match status" value="1"/>
</dbReference>
<dbReference type="SUPFAM" id="SSF75632">
    <property type="entry name" value="Cullin homology domain"/>
    <property type="match status" value="1"/>
</dbReference>
<dbReference type="SUPFAM" id="SSF74788">
    <property type="entry name" value="Cullin repeat-like"/>
    <property type="match status" value="1"/>
</dbReference>
<dbReference type="SUPFAM" id="SSF46785">
    <property type="entry name" value="Winged helix' DNA-binding domain"/>
    <property type="match status" value="1"/>
</dbReference>
<dbReference type="PROSITE" id="PS50069">
    <property type="entry name" value="CULLIN_2"/>
    <property type="match status" value="1"/>
</dbReference>
<reference key="1">
    <citation type="submission" date="2001-08" db="EMBL/GenBank/DDBJ databases">
        <title>Characterization of plant cullins.</title>
        <authorList>
            <person name="Shen W.H."/>
            <person name="Genschik P."/>
        </authorList>
    </citation>
    <scope>NUCLEOTIDE SEQUENCE [MRNA]</scope>
</reference>
<reference key="2">
    <citation type="journal article" date="2000" name="Nature">
        <title>Sequence and analysis of chromosome 1 of the plant Arabidopsis thaliana.</title>
        <authorList>
            <person name="Theologis A."/>
            <person name="Ecker J.R."/>
            <person name="Palm C.J."/>
            <person name="Federspiel N.A."/>
            <person name="Kaul S."/>
            <person name="White O."/>
            <person name="Alonso J."/>
            <person name="Altafi H."/>
            <person name="Araujo R."/>
            <person name="Bowman C.L."/>
            <person name="Brooks S.Y."/>
            <person name="Buehler E."/>
            <person name="Chan A."/>
            <person name="Chao Q."/>
            <person name="Chen H."/>
            <person name="Cheuk R.F."/>
            <person name="Chin C.W."/>
            <person name="Chung M.K."/>
            <person name="Conn L."/>
            <person name="Conway A.B."/>
            <person name="Conway A.R."/>
            <person name="Creasy T.H."/>
            <person name="Dewar K."/>
            <person name="Dunn P."/>
            <person name="Etgu P."/>
            <person name="Feldblyum T.V."/>
            <person name="Feng J.-D."/>
            <person name="Fong B."/>
            <person name="Fujii C.Y."/>
            <person name="Gill J.E."/>
            <person name="Goldsmith A.D."/>
            <person name="Haas B."/>
            <person name="Hansen N.F."/>
            <person name="Hughes B."/>
            <person name="Huizar L."/>
            <person name="Hunter J.L."/>
            <person name="Jenkins J."/>
            <person name="Johnson-Hopson C."/>
            <person name="Khan S."/>
            <person name="Khaykin E."/>
            <person name="Kim C.J."/>
            <person name="Koo H.L."/>
            <person name="Kremenetskaia I."/>
            <person name="Kurtz D.B."/>
            <person name="Kwan A."/>
            <person name="Lam B."/>
            <person name="Langin-Hooper S."/>
            <person name="Lee A."/>
            <person name="Lee J.M."/>
            <person name="Lenz C.A."/>
            <person name="Li J.H."/>
            <person name="Li Y.-P."/>
            <person name="Lin X."/>
            <person name="Liu S.X."/>
            <person name="Liu Z.A."/>
            <person name="Luros J.S."/>
            <person name="Maiti R."/>
            <person name="Marziali A."/>
            <person name="Militscher J."/>
            <person name="Miranda M."/>
            <person name="Nguyen M."/>
            <person name="Nierman W.C."/>
            <person name="Osborne B.I."/>
            <person name="Pai G."/>
            <person name="Peterson J."/>
            <person name="Pham P.K."/>
            <person name="Rizzo M."/>
            <person name="Rooney T."/>
            <person name="Rowley D."/>
            <person name="Sakano H."/>
            <person name="Salzberg S.L."/>
            <person name="Schwartz J.R."/>
            <person name="Shinn P."/>
            <person name="Southwick A.M."/>
            <person name="Sun H."/>
            <person name="Tallon L.J."/>
            <person name="Tambunga G."/>
            <person name="Toriumi M.J."/>
            <person name="Town C.D."/>
            <person name="Utterback T."/>
            <person name="Van Aken S."/>
            <person name="Vaysberg M."/>
            <person name="Vysotskaia V.S."/>
            <person name="Walker M."/>
            <person name="Wu D."/>
            <person name="Yu G."/>
            <person name="Fraser C.M."/>
            <person name="Venter J.C."/>
            <person name="Davis R.W."/>
        </authorList>
    </citation>
    <scope>NUCLEOTIDE SEQUENCE [LARGE SCALE GENOMIC DNA]</scope>
    <source>
        <strain>cv. Columbia</strain>
    </source>
</reference>
<reference key="3">
    <citation type="journal article" date="2017" name="Plant J.">
        <title>Araport11: a complete reannotation of the Arabidopsis thaliana reference genome.</title>
        <authorList>
            <person name="Cheng C.Y."/>
            <person name="Krishnakumar V."/>
            <person name="Chan A.P."/>
            <person name="Thibaud-Nissen F."/>
            <person name="Schobel S."/>
            <person name="Town C.D."/>
        </authorList>
    </citation>
    <scope>GENOME REANNOTATION</scope>
    <source>
        <strain>cv. Columbia</strain>
    </source>
</reference>
<reference key="4">
    <citation type="submission" date="2006-07" db="EMBL/GenBank/DDBJ databases">
        <title>Large-scale analysis of RIKEN Arabidopsis full-length (RAFL) cDNAs.</title>
        <authorList>
            <person name="Totoki Y."/>
            <person name="Seki M."/>
            <person name="Ishida J."/>
            <person name="Nakajima M."/>
            <person name="Enju A."/>
            <person name="Kamiya A."/>
            <person name="Narusaka M."/>
            <person name="Shin-i T."/>
            <person name="Nakagawa M."/>
            <person name="Sakamoto N."/>
            <person name="Oishi K."/>
            <person name="Kohara Y."/>
            <person name="Kobayashi M."/>
            <person name="Toyoda A."/>
            <person name="Sakaki Y."/>
            <person name="Sakurai T."/>
            <person name="Iida K."/>
            <person name="Akiyama K."/>
            <person name="Satou M."/>
            <person name="Toyoda T."/>
            <person name="Konagaya A."/>
            <person name="Carninci P."/>
            <person name="Kawai J."/>
            <person name="Hayashizaki Y."/>
            <person name="Shinozaki K."/>
        </authorList>
    </citation>
    <scope>NUCLEOTIDE SEQUENCE [LARGE SCALE MRNA]</scope>
    <source>
        <strain>cv. Columbia</strain>
    </source>
</reference>
<reference key="5">
    <citation type="journal article" date="2003" name="Plant Cell">
        <title>Characterization of the last subunit of the Arabidopsis COP9 signalosome: implications for the overall structure and origin of the complex.</title>
        <authorList>
            <person name="Serino G."/>
            <person name="Su H."/>
            <person name="Peng Z."/>
            <person name="Tsuge T."/>
            <person name="Wei N."/>
            <person name="Gu H."/>
            <person name="Deng X.-W."/>
        </authorList>
    </citation>
    <scope>INTERACTION WITH CSN2</scope>
</reference>
<reference key="6">
    <citation type="journal article" date="2005" name="J. Biol. Chem.">
        <title>Cullins 3a and 3b assemble with members of the broad complex/tramtrack/bric-a-brac (BTB) protein family to form essential ubiquitin-protein ligases (E3s) in Arabidopsis.</title>
        <authorList>
            <person name="Gingerich D.J."/>
            <person name="Gagne J.M."/>
            <person name="Salter D.W."/>
            <person name="Hellmann H."/>
            <person name="Estelle M."/>
            <person name="Ma L."/>
            <person name="Vierstra R.D."/>
        </authorList>
    </citation>
    <scope>INTERACTION WITH BPM1</scope>
</reference>
<reference key="7">
    <citation type="journal article" date="2005" name="Plant Cell">
        <title>Arabidopsis has two redundant Cullin3 proteins that are essential for embryo development and that interact with RBX1 and BTB proteins to form multisubunit E3 ubiquitin ligase complexes in vivo.</title>
        <authorList>
            <person name="Figueroa P."/>
            <person name="Gusmaroli G."/>
            <person name="Serino G."/>
            <person name="Habashi J."/>
            <person name="Ma L."/>
            <person name="Shen Y."/>
            <person name="Feng S."/>
            <person name="Bostick M."/>
            <person name="Callis J."/>
            <person name="Hellmann H."/>
            <person name="Deng X.W."/>
        </authorList>
    </citation>
    <scope>FUNCTION</scope>
    <scope>INTERACTION WITH RBX1A AND BTB PROTEINS</scope>
    <scope>MUTAGENESIS OF 48-SER-PHE-49</scope>
    <scope>NEDDYLATION</scope>
    <scope>DISRUPTION PHENOTYPE</scope>
</reference>
<reference key="8">
    <citation type="journal article" date="2005" name="Plant J.">
        <title>Molecular and functional characterization of Arabidopsis Cullin 3A.</title>
        <authorList>
            <person name="Dieterle M."/>
            <person name="Thomann A."/>
            <person name="Renou J.P."/>
            <person name="Parmentier Y."/>
            <person name="Cognat V."/>
            <person name="Lemonnier G."/>
            <person name="Muller R."/>
            <person name="Shen W.H."/>
            <person name="Kretsch T."/>
            <person name="Genschik P."/>
        </authorList>
    </citation>
    <scope>FUNCTION</scope>
    <scope>INTERACTION WITH RBX1A</scope>
    <scope>DISRUPTION PHENOTYPE</scope>
</reference>
<reference key="9">
    <citation type="journal article" date="2005" name="Plant J.">
        <title>Arabidopsis CUL3A and CUL3B genes are essential for normal embryogenesis.</title>
        <authorList>
            <person name="Thomann A."/>
            <person name="Brukhin V."/>
            <person name="Dieterle M."/>
            <person name="Gheyeselinck J."/>
            <person name="Vantard M."/>
            <person name="Grossniklaus U."/>
            <person name="Genschik P."/>
        </authorList>
    </citation>
    <scope>FUNCTION</scope>
    <scope>DEVELOPMENTAL STAGE</scope>
    <scope>DISRUPTION PHENOTYPE</scope>
</reference>
<reference key="10">
    <citation type="journal article" date="2005" name="Plant Physiol.">
        <title>Arabidopsis AtCUL3a and AtCUL3b form complexes with members of the BTB/POZ-MATH protein family.</title>
        <authorList>
            <person name="Weber H."/>
            <person name="Bernhardt A."/>
            <person name="Dieterle M."/>
            <person name="Hano P."/>
            <person name="Mutlu A."/>
            <person name="Estelle M."/>
            <person name="Genschik P."/>
            <person name="Hellmann H."/>
        </authorList>
    </citation>
    <scope>CUL3-RBX1-BTB UBIQUITIN-PROTEIN LIGASE COMPLEX</scope>
    <scope>INTERACTION WITH BPM3</scope>
</reference>
<reference key="11">
    <citation type="journal article" date="2009" name="PLoS Genet.">
        <title>Arabidopsis CULLIN3 genes regulate primary root growth and patterning by ethylene-dependent and -independent mechanisms.</title>
        <authorList>
            <person name="Thomann A."/>
            <person name="Lechner E."/>
            <person name="Hansen M."/>
            <person name="Dumbliauskas E."/>
            <person name="Parmentier Y."/>
            <person name="Kieber J."/>
            <person name="Scheres B."/>
            <person name="Genschik P."/>
        </authorList>
    </citation>
    <scope>FUNCTION</scope>
</reference>
<reference key="12">
    <citation type="journal article" date="2012" name="Nature">
        <title>NPR3 and NPR4 are receptors for the immune signal salicylic acid in plants.</title>
        <authorList>
            <person name="Fu Z.Q."/>
            <person name="Yan S."/>
            <person name="Saleh A."/>
            <person name="Wang W."/>
            <person name="Ruble J."/>
            <person name="Oka N."/>
            <person name="Mohan R."/>
            <person name="Spoel S.H."/>
            <person name="Tada Y."/>
            <person name="Zheng N."/>
            <person name="Dong X."/>
        </authorList>
    </citation>
    <scope>INTERACTION WITH NPR1; NPR3 AND NPR4</scope>
    <source>
        <strain>cv. Columbia</strain>
    </source>
</reference>
<reference key="13">
    <citation type="journal article" date="2014" name="Plant J.">
        <title>Regulation of plant immunity through ubiquitin-mediated modulation of Ca(2+) -calmodulin-AtSR1/CAMTA3 signaling.</title>
        <authorList>
            <person name="Zhang L."/>
            <person name="Du L."/>
            <person name="Shen C."/>
            <person name="Yang Y."/>
            <person name="Poovaiah B.W."/>
        </authorList>
    </citation>
    <scope>INTERACTION WITH SR1IP1</scope>
</reference>
<reference key="14">
    <citation type="journal article" date="2022" name="Nature">
        <title>Structural basis of NPR1 in activating plant immunity.</title>
        <authorList>
            <person name="Kumar S."/>
            <person name="Zavaliev R."/>
            <person name="Wu Q."/>
            <person name="Zhou Y."/>
            <person name="Cheng J."/>
            <person name="Dillard L."/>
            <person name="Powers J."/>
            <person name="Withers J."/>
            <person name="Zhao J."/>
            <person name="Guan Z."/>
            <person name="Borgnia M.J."/>
            <person name="Bartesaghi A."/>
            <person name="Dong X."/>
            <person name="Zhou P."/>
        </authorList>
    </citation>
    <scope>INTERACTION WITH NPR1</scope>
</reference>
<proteinExistence type="evidence at protein level"/>